<evidence type="ECO:0000250" key="1"/>
<evidence type="ECO:0000250" key="2">
    <source>
        <dbReference type="UniProtKB" id="P12814"/>
    </source>
</evidence>
<evidence type="ECO:0000250" key="3">
    <source>
        <dbReference type="UniProtKB" id="Q7TPR4"/>
    </source>
</evidence>
<evidence type="ECO:0000250" key="4">
    <source>
        <dbReference type="UniProtKB" id="Q9Z1P2"/>
    </source>
</evidence>
<evidence type="ECO:0000255" key="5">
    <source>
        <dbReference type="PROSITE-ProRule" id="PRU00044"/>
    </source>
</evidence>
<evidence type="ECO:0000255" key="6">
    <source>
        <dbReference type="PROSITE-ProRule" id="PRU00448"/>
    </source>
</evidence>
<evidence type="ECO:0000305" key="7"/>
<name>ACTN1_BOVIN</name>
<proteinExistence type="evidence at transcript level"/>
<gene>
    <name type="primary">ACTN1</name>
</gene>
<accession>Q3B7N2</accession>
<comment type="function">
    <text evidence="2">F-actin cross-linking protein which is thought to anchor actin to a variety of intracellular structures. Association with IGSF8 regulates the immune synapse formation and is required for efficient T-cell activation.</text>
</comment>
<comment type="subunit">
    <text evidence="2 3 4">Homodimer; antiparallel. Interacts with MYOZ2, TTID and LPP. Interacts with DDN (By similarity). Interacts with PSD. Interacts with MICALL2 (By similarity). Interacts with DNM2 and CTTN. Interacts with PDLIM1. Interacts with PDLIM2. Interacts with PDLIM4 (via PDZ domain) (By similarity). Interacts with IGSF8 (By similarity).</text>
</comment>
<comment type="subcellular location">
    <subcellularLocation>
        <location evidence="2">Cytoplasm</location>
        <location evidence="2">Cytoskeleton</location>
    </subcellularLocation>
    <subcellularLocation>
        <location evidence="2">Cytoplasm</location>
        <location evidence="2">Myofibril</location>
        <location evidence="2">Sarcomere</location>
        <location evidence="2">Z line</location>
    </subcellularLocation>
    <subcellularLocation>
        <location evidence="2">Cell membrane</location>
    </subcellularLocation>
    <subcellularLocation>
        <location evidence="4">Cell junction</location>
    </subcellularLocation>
    <subcellularLocation>
        <location evidence="3">Cell projection</location>
        <location evidence="3">Ruffle</location>
    </subcellularLocation>
    <text evidence="3">Colocalizes with MYOZ2 and PPP3CA at the Z-line of heart and skeletal muscle. Colocalizes with PSD in membrane ruffles and central reticular structures.</text>
</comment>
<comment type="similarity">
    <text evidence="7">Belongs to the alpha-actinin family.</text>
</comment>
<reference key="1">
    <citation type="submission" date="2005-10" db="EMBL/GenBank/DDBJ databases">
        <authorList>
            <consortium name="NIH - Mammalian Gene Collection (MGC) project"/>
        </authorList>
    </citation>
    <scope>NUCLEOTIDE SEQUENCE [LARGE SCALE MRNA]</scope>
    <source>
        <strain>Hereford</strain>
        <tissue>Thymus</tissue>
    </source>
</reference>
<dbReference type="EMBL" id="BC107533">
    <property type="protein sequence ID" value="AAI07534.1"/>
    <property type="molecule type" value="mRNA"/>
</dbReference>
<dbReference type="RefSeq" id="NP_001030428.1">
    <property type="nucleotide sequence ID" value="NM_001035351.2"/>
</dbReference>
<dbReference type="SMR" id="Q3B7N2"/>
<dbReference type="FunCoup" id="Q3B7N2">
    <property type="interactions" value="1813"/>
</dbReference>
<dbReference type="STRING" id="9913.ENSBTAP00000073520"/>
<dbReference type="PaxDb" id="9913-ENSBTAP00000024301"/>
<dbReference type="PeptideAtlas" id="Q3B7N2"/>
<dbReference type="Ensembl" id="ENSBTAT00000024301.4">
    <property type="protein sequence ID" value="ENSBTAP00000024301.3"/>
    <property type="gene ID" value="ENSBTAG00000018255.7"/>
</dbReference>
<dbReference type="GeneID" id="524770"/>
<dbReference type="KEGG" id="bta:524770"/>
<dbReference type="CTD" id="87"/>
<dbReference type="VEuPathDB" id="HostDB:ENSBTAG00000018255"/>
<dbReference type="VGNC" id="VGNC:25581">
    <property type="gene designation" value="ACTN1"/>
</dbReference>
<dbReference type="eggNOG" id="KOG0035">
    <property type="taxonomic scope" value="Eukaryota"/>
</dbReference>
<dbReference type="GeneTree" id="ENSGT00940000155548"/>
<dbReference type="HOGENOM" id="CLU_005217_1_1_1"/>
<dbReference type="InParanoid" id="Q3B7N2"/>
<dbReference type="OrthoDB" id="10017054at2759"/>
<dbReference type="TreeFam" id="TF352676"/>
<dbReference type="Reactome" id="R-BTA-114608">
    <property type="pathway name" value="Platelet degranulation"/>
</dbReference>
<dbReference type="Reactome" id="R-BTA-446388">
    <property type="pathway name" value="Regulation of cytoskeletal remodeling and cell spreading by IPP complex components"/>
</dbReference>
<dbReference type="Reactome" id="R-BTA-9013405">
    <property type="pathway name" value="RHOD GTPase cycle"/>
</dbReference>
<dbReference type="Reactome" id="R-BTA-9013418">
    <property type="pathway name" value="RHOBTB2 GTPase cycle"/>
</dbReference>
<dbReference type="Reactome" id="R-BTA-9035034">
    <property type="pathway name" value="RHOF GTPase cycle"/>
</dbReference>
<dbReference type="Proteomes" id="UP000009136">
    <property type="component" value="Chromosome 10"/>
</dbReference>
<dbReference type="Bgee" id="ENSBTAG00000018255">
    <property type="expression patterns" value="Expressed in trachea and 109 other cell types or tissues"/>
</dbReference>
<dbReference type="GO" id="GO:0005923">
    <property type="term" value="C:bicellular tight junction"/>
    <property type="evidence" value="ECO:0000250"/>
    <property type="project" value="AgBase"/>
</dbReference>
<dbReference type="GO" id="GO:0030054">
    <property type="term" value="C:cell junction"/>
    <property type="evidence" value="ECO:0000318"/>
    <property type="project" value="GO_Central"/>
</dbReference>
<dbReference type="GO" id="GO:0031252">
    <property type="term" value="C:cell leading edge"/>
    <property type="evidence" value="ECO:0000250"/>
    <property type="project" value="AgBase"/>
</dbReference>
<dbReference type="GO" id="GO:0042995">
    <property type="term" value="C:cell projection"/>
    <property type="evidence" value="ECO:0000318"/>
    <property type="project" value="GO_Central"/>
</dbReference>
<dbReference type="GO" id="GO:0030864">
    <property type="term" value="C:cortical actin cytoskeleton"/>
    <property type="evidence" value="ECO:0000318"/>
    <property type="project" value="GO_Central"/>
</dbReference>
<dbReference type="GO" id="GO:0097433">
    <property type="term" value="C:dense body"/>
    <property type="evidence" value="ECO:0000250"/>
    <property type="project" value="AgBase"/>
</dbReference>
<dbReference type="GO" id="GO:0005925">
    <property type="term" value="C:focal adhesion"/>
    <property type="evidence" value="ECO:0000250"/>
    <property type="project" value="AgBase"/>
</dbReference>
<dbReference type="GO" id="GO:0090637">
    <property type="term" value="C:inner dense plaque of desmosome"/>
    <property type="evidence" value="ECO:0000250"/>
    <property type="project" value="AgBase"/>
</dbReference>
<dbReference type="GO" id="GO:0030027">
    <property type="term" value="C:lamellipodium"/>
    <property type="evidence" value="ECO:0000250"/>
    <property type="project" value="AgBase"/>
</dbReference>
<dbReference type="GO" id="GO:0016328">
    <property type="term" value="C:lateral plasma membrane"/>
    <property type="evidence" value="ECO:0000250"/>
    <property type="project" value="AgBase"/>
</dbReference>
<dbReference type="GO" id="GO:0090636">
    <property type="term" value="C:outer dense plaque of desmosome"/>
    <property type="evidence" value="ECO:0000250"/>
    <property type="project" value="AgBase"/>
</dbReference>
<dbReference type="GO" id="GO:0005886">
    <property type="term" value="C:plasma membrane"/>
    <property type="evidence" value="ECO:0000318"/>
    <property type="project" value="GO_Central"/>
</dbReference>
<dbReference type="GO" id="GO:0001726">
    <property type="term" value="C:ruffle"/>
    <property type="evidence" value="ECO:0007669"/>
    <property type="project" value="UniProtKB-SubCell"/>
</dbReference>
<dbReference type="GO" id="GO:0042383">
    <property type="term" value="C:sarcolemma"/>
    <property type="evidence" value="ECO:0000250"/>
    <property type="project" value="AgBase"/>
</dbReference>
<dbReference type="GO" id="GO:0030486">
    <property type="term" value="C:smooth muscle dense body"/>
    <property type="evidence" value="ECO:0000250"/>
    <property type="project" value="AgBase"/>
</dbReference>
<dbReference type="GO" id="GO:0001725">
    <property type="term" value="C:stress fiber"/>
    <property type="evidence" value="ECO:0000250"/>
    <property type="project" value="AgBase"/>
</dbReference>
<dbReference type="GO" id="GO:1990357">
    <property type="term" value="C:terminal web"/>
    <property type="evidence" value="ECO:0000250"/>
    <property type="project" value="AgBase"/>
</dbReference>
<dbReference type="GO" id="GO:0012506">
    <property type="term" value="C:vesicle membrane"/>
    <property type="evidence" value="ECO:0000303"/>
    <property type="project" value="UniProtKB"/>
</dbReference>
<dbReference type="GO" id="GO:0030018">
    <property type="term" value="C:Z disc"/>
    <property type="evidence" value="ECO:0000318"/>
    <property type="project" value="GO_Central"/>
</dbReference>
<dbReference type="GO" id="GO:0005915">
    <property type="term" value="C:zonula adherens"/>
    <property type="evidence" value="ECO:0000250"/>
    <property type="project" value="AgBase"/>
</dbReference>
<dbReference type="GO" id="GO:0051015">
    <property type="term" value="F:actin filament binding"/>
    <property type="evidence" value="ECO:0000314"/>
    <property type="project" value="UniProtKB"/>
</dbReference>
<dbReference type="GO" id="GO:0051393">
    <property type="term" value="F:alpha-actinin binding"/>
    <property type="evidence" value="ECO:0000250"/>
    <property type="project" value="AgBase"/>
</dbReference>
<dbReference type="GO" id="GO:0005509">
    <property type="term" value="F:calcium ion binding"/>
    <property type="evidence" value="ECO:0007669"/>
    <property type="project" value="InterPro"/>
</dbReference>
<dbReference type="GO" id="GO:0042803">
    <property type="term" value="F:protein homodimerization activity"/>
    <property type="evidence" value="ECO:0000250"/>
    <property type="project" value="AgBase"/>
</dbReference>
<dbReference type="GO" id="GO:0043495">
    <property type="term" value="F:protein-membrane adaptor activity"/>
    <property type="evidence" value="ECO:0000303"/>
    <property type="project" value="UniProtKB"/>
</dbReference>
<dbReference type="GO" id="GO:0005523">
    <property type="term" value="F:tropomyosin binding"/>
    <property type="evidence" value="ECO:0000314"/>
    <property type="project" value="UniProtKB"/>
</dbReference>
<dbReference type="GO" id="GO:0017166">
    <property type="term" value="F:vinculin binding"/>
    <property type="evidence" value="ECO:0000250"/>
    <property type="project" value="AgBase"/>
</dbReference>
<dbReference type="GO" id="GO:0030036">
    <property type="term" value="P:actin cytoskeleton organization"/>
    <property type="evidence" value="ECO:0000318"/>
    <property type="project" value="GO_Central"/>
</dbReference>
<dbReference type="GO" id="GO:0051234">
    <property type="term" value="P:establishment of localization"/>
    <property type="evidence" value="ECO:0000303"/>
    <property type="project" value="UniProtKB"/>
</dbReference>
<dbReference type="GO" id="GO:0055001">
    <property type="term" value="P:muscle cell development"/>
    <property type="evidence" value="ECO:0000318"/>
    <property type="project" value="GO_Central"/>
</dbReference>
<dbReference type="GO" id="GO:0043462">
    <property type="term" value="P:regulation of ATP-dependent activity"/>
    <property type="evidence" value="ECO:0000314"/>
    <property type="project" value="UniProtKB"/>
</dbReference>
<dbReference type="GO" id="GO:0046928">
    <property type="term" value="P:regulation of neurotransmitter secretion"/>
    <property type="evidence" value="ECO:0000303"/>
    <property type="project" value="UniProtKB"/>
</dbReference>
<dbReference type="GO" id="GO:0045214">
    <property type="term" value="P:sarcomere organization"/>
    <property type="evidence" value="ECO:0000250"/>
    <property type="project" value="AgBase"/>
</dbReference>
<dbReference type="GO" id="GO:0048741">
    <property type="term" value="P:skeletal muscle fiber development"/>
    <property type="evidence" value="ECO:0000250"/>
    <property type="project" value="AgBase"/>
</dbReference>
<dbReference type="CDD" id="cd21214">
    <property type="entry name" value="CH_ACTN_rpt1"/>
    <property type="match status" value="1"/>
</dbReference>
<dbReference type="CDD" id="cd21216">
    <property type="entry name" value="CH_ACTN_rpt2"/>
    <property type="match status" value="1"/>
</dbReference>
<dbReference type="CDD" id="cd00051">
    <property type="entry name" value="EFh"/>
    <property type="match status" value="1"/>
</dbReference>
<dbReference type="CDD" id="cd00176">
    <property type="entry name" value="SPEC"/>
    <property type="match status" value="2"/>
</dbReference>
<dbReference type="FunFam" id="1.10.238.10:FF:000004">
    <property type="entry name" value="Actinin alpha 1"/>
    <property type="match status" value="1"/>
</dbReference>
<dbReference type="FunFam" id="1.10.418.10:FF:000001">
    <property type="entry name" value="Actinin alpha 1"/>
    <property type="match status" value="1"/>
</dbReference>
<dbReference type="FunFam" id="1.20.58.60:FF:000004">
    <property type="entry name" value="Actinin alpha 1"/>
    <property type="match status" value="1"/>
</dbReference>
<dbReference type="FunFam" id="1.20.58.60:FF:000005">
    <property type="entry name" value="Actinin alpha 1"/>
    <property type="match status" value="1"/>
</dbReference>
<dbReference type="FunFam" id="1.10.418.10:FF:000005">
    <property type="entry name" value="Actinin alpha 4"/>
    <property type="match status" value="1"/>
</dbReference>
<dbReference type="FunFam" id="1.10.238.10:FF:000018">
    <property type="entry name" value="Actinin, alpha 1"/>
    <property type="match status" value="1"/>
</dbReference>
<dbReference type="FunFam" id="1.20.58.60:FF:000002">
    <property type="entry name" value="Actinin, alpha 1"/>
    <property type="match status" value="1"/>
</dbReference>
<dbReference type="FunFam" id="1.20.58.60:FF:000003">
    <property type="entry name" value="Actinin, alpha 1"/>
    <property type="match status" value="1"/>
</dbReference>
<dbReference type="Gene3D" id="1.20.58.60">
    <property type="match status" value="4"/>
</dbReference>
<dbReference type="Gene3D" id="1.10.418.10">
    <property type="entry name" value="Calponin-like domain"/>
    <property type="match status" value="2"/>
</dbReference>
<dbReference type="Gene3D" id="1.10.238.10">
    <property type="entry name" value="EF-hand"/>
    <property type="match status" value="2"/>
</dbReference>
<dbReference type="InterPro" id="IPR001589">
    <property type="entry name" value="Actinin_actin-bd_CS"/>
</dbReference>
<dbReference type="InterPro" id="IPR001715">
    <property type="entry name" value="CH_dom"/>
</dbReference>
<dbReference type="InterPro" id="IPR036872">
    <property type="entry name" value="CH_dom_sf"/>
</dbReference>
<dbReference type="InterPro" id="IPR011992">
    <property type="entry name" value="EF-hand-dom_pair"/>
</dbReference>
<dbReference type="InterPro" id="IPR014837">
    <property type="entry name" value="EF-hand_Ca_insen"/>
</dbReference>
<dbReference type="InterPro" id="IPR018247">
    <property type="entry name" value="EF_Hand_1_Ca_BS"/>
</dbReference>
<dbReference type="InterPro" id="IPR002048">
    <property type="entry name" value="EF_hand_dom"/>
</dbReference>
<dbReference type="InterPro" id="IPR018159">
    <property type="entry name" value="Spectrin/alpha-actinin"/>
</dbReference>
<dbReference type="InterPro" id="IPR002017">
    <property type="entry name" value="Spectrin_repeat"/>
</dbReference>
<dbReference type="PANTHER" id="PTHR11915">
    <property type="entry name" value="SPECTRIN/FILAMIN RELATED CYTOSKELETAL PROTEIN"/>
    <property type="match status" value="1"/>
</dbReference>
<dbReference type="Pfam" id="PF00307">
    <property type="entry name" value="CH"/>
    <property type="match status" value="2"/>
</dbReference>
<dbReference type="Pfam" id="PF13405">
    <property type="entry name" value="EF-hand_6"/>
    <property type="match status" value="1"/>
</dbReference>
<dbReference type="Pfam" id="PF08726">
    <property type="entry name" value="EFhand_Ca_insen"/>
    <property type="match status" value="1"/>
</dbReference>
<dbReference type="Pfam" id="PF00435">
    <property type="entry name" value="Spectrin"/>
    <property type="match status" value="4"/>
</dbReference>
<dbReference type="SMART" id="SM00033">
    <property type="entry name" value="CH"/>
    <property type="match status" value="2"/>
</dbReference>
<dbReference type="SMART" id="SM00054">
    <property type="entry name" value="EFh"/>
    <property type="match status" value="2"/>
</dbReference>
<dbReference type="SMART" id="SM01184">
    <property type="entry name" value="efhand_Ca_insen"/>
    <property type="match status" value="1"/>
</dbReference>
<dbReference type="SMART" id="SM00150">
    <property type="entry name" value="SPEC"/>
    <property type="match status" value="3"/>
</dbReference>
<dbReference type="SUPFAM" id="SSF47576">
    <property type="entry name" value="Calponin-homology domain, CH-domain"/>
    <property type="match status" value="1"/>
</dbReference>
<dbReference type="SUPFAM" id="SSF47473">
    <property type="entry name" value="EF-hand"/>
    <property type="match status" value="1"/>
</dbReference>
<dbReference type="SUPFAM" id="SSF46966">
    <property type="entry name" value="Spectrin repeat"/>
    <property type="match status" value="4"/>
</dbReference>
<dbReference type="PROSITE" id="PS00019">
    <property type="entry name" value="ACTININ_1"/>
    <property type="match status" value="1"/>
</dbReference>
<dbReference type="PROSITE" id="PS00020">
    <property type="entry name" value="ACTININ_2"/>
    <property type="match status" value="1"/>
</dbReference>
<dbReference type="PROSITE" id="PS50021">
    <property type="entry name" value="CH"/>
    <property type="match status" value="2"/>
</dbReference>
<dbReference type="PROSITE" id="PS00018">
    <property type="entry name" value="EF_HAND_1"/>
    <property type="match status" value="1"/>
</dbReference>
<dbReference type="PROSITE" id="PS50222">
    <property type="entry name" value="EF_HAND_2"/>
    <property type="match status" value="2"/>
</dbReference>
<protein>
    <recommendedName>
        <fullName>Alpha-actinin-1</fullName>
    </recommendedName>
    <alternativeName>
        <fullName>Alpha-actinin cytoskeletal isoform</fullName>
    </alternativeName>
    <alternativeName>
        <fullName>F-actin cross-linking protein</fullName>
    </alternativeName>
    <alternativeName>
        <fullName>Non-muscle alpha-actinin-1</fullName>
    </alternativeName>
</protein>
<organism>
    <name type="scientific">Bos taurus</name>
    <name type="common">Bovine</name>
    <dbReference type="NCBI Taxonomy" id="9913"/>
    <lineage>
        <taxon>Eukaryota</taxon>
        <taxon>Metazoa</taxon>
        <taxon>Chordata</taxon>
        <taxon>Craniata</taxon>
        <taxon>Vertebrata</taxon>
        <taxon>Euteleostomi</taxon>
        <taxon>Mammalia</taxon>
        <taxon>Eutheria</taxon>
        <taxon>Laurasiatheria</taxon>
        <taxon>Artiodactyla</taxon>
        <taxon>Ruminantia</taxon>
        <taxon>Pecora</taxon>
        <taxon>Bovidae</taxon>
        <taxon>Bovinae</taxon>
        <taxon>Bos</taxon>
    </lineage>
</organism>
<sequence length="892" mass="102980">MDHYDSQQTNDYMQPEEDWDRDLLLDPAWEKQQRKTFTAWCNSHLRKAGTQIENIEEDFRDGLKLMLLLEVISGERLAKPERGKMRVHKISNVNKALDFIASKGVKLVSIGAEEIVDGNVKMTLGMIWTIILRFAIQDISVEETSAKEGLLLWCQRKTAPYKNVNIQNFHISWKDGLGFCALIHRHRPELIDYGKLRKDDPLTNLNTAFDVAEKYLDIPKMLDAEDIVGTARPDEKAIMTYVSSFYHAFSGAQKAETAANRICKVLAVNQENEQLMEDYEKLASDLLEWIRRTIPWLENRAPENTMHAMQQKLEDFRDYRRLHKPPKVQEKCQLEINFNTLQTKLRLSNRPAFMPSEGRMVSDINNAWGCLEQAEKGYEEWLLNEIRRLERLDHLAEKFRQKASIHEAWTDGKEAMLRQKDYETATLSEIKALLKKHEAFESDLAAHQDRVEQIAAIAQELNELDYYDSPSVNARCQKICDQWDNLGALTQKRREALERTEKLLETIDQLYLEYAKRAAPFNNWMEGAMEDLQDTFIVHTIEEIQGLTTAHEQFKATLPDADKERLAILGIHNEVSKIVQTYHVNMAGTNPYTTITPQEINGKWDHVRQLVPRRDQALTEEHARQQHNERLRKQFGAQANVIGPWIQTKMEEIGRISIEMHGTLEDQLNHLRQYEKSIVNYKPKIDQLEGDHQLIQEALIFDNKHTNYTMEHIRVGWEQLLTTIARTINEVENQILTRDAKGISQEQMNEFRASFNHFDRDHSGTLGPEEFKACLISLGYDIGNDPQGEAEFARIMSIVDPNRLGVVTFQAFIDFMSRETADTDTADQVMASFKILAGDKNYITVDELRRELPPDQAEYCIARMAPYTGPDAVPGALDYMSFSTALYGESDL</sequence>
<keyword id="KW-0007">Acetylation</keyword>
<keyword id="KW-0009">Actin-binding</keyword>
<keyword id="KW-0106">Calcium</keyword>
<keyword id="KW-0965">Cell junction</keyword>
<keyword id="KW-1003">Cell membrane</keyword>
<keyword id="KW-0966">Cell projection</keyword>
<keyword id="KW-0963">Cytoplasm</keyword>
<keyword id="KW-0206">Cytoskeleton</keyword>
<keyword id="KW-0472">Membrane</keyword>
<keyword id="KW-0479">Metal-binding</keyword>
<keyword id="KW-0597">Phosphoprotein</keyword>
<keyword id="KW-1185">Reference proteome</keyword>
<keyword id="KW-0677">Repeat</keyword>
<feature type="chain" id="PRO_0000254032" description="Alpha-actinin-1">
    <location>
        <begin position="1"/>
        <end position="892"/>
    </location>
</feature>
<feature type="domain" description="Calponin-homology (CH) 1" evidence="5">
    <location>
        <begin position="31"/>
        <end position="135"/>
    </location>
</feature>
<feature type="domain" description="Calponin-homology (CH) 2" evidence="5">
    <location>
        <begin position="144"/>
        <end position="250"/>
    </location>
</feature>
<feature type="repeat" description="Spectrin 1">
    <location>
        <begin position="274"/>
        <end position="384"/>
    </location>
</feature>
<feature type="repeat" description="Spectrin 2">
    <location>
        <begin position="394"/>
        <end position="499"/>
    </location>
</feature>
<feature type="repeat" description="Spectrin 3">
    <location>
        <begin position="509"/>
        <end position="620"/>
    </location>
</feature>
<feature type="repeat" description="Spectrin 4">
    <location>
        <begin position="630"/>
        <end position="733"/>
    </location>
</feature>
<feature type="domain" description="EF-hand 1" evidence="6">
    <location>
        <begin position="746"/>
        <end position="781"/>
    </location>
</feature>
<feature type="domain" description="EF-hand 2" evidence="6">
    <location>
        <begin position="787"/>
        <end position="822"/>
    </location>
</feature>
<feature type="region of interest" description="Actin-binding">
    <location>
        <begin position="1"/>
        <end position="247"/>
    </location>
</feature>
<feature type="region of interest" description="Interaction with DDN" evidence="1">
    <location>
        <begin position="274"/>
        <end position="733"/>
    </location>
</feature>
<feature type="binding site" evidence="6">
    <location>
        <position position="759"/>
    </location>
    <ligand>
        <name>Ca(2+)</name>
        <dbReference type="ChEBI" id="CHEBI:29108"/>
    </ligand>
</feature>
<feature type="binding site" evidence="6">
    <location>
        <position position="761"/>
    </location>
    <ligand>
        <name>Ca(2+)</name>
        <dbReference type="ChEBI" id="CHEBI:29108"/>
    </ligand>
</feature>
<feature type="binding site" evidence="6">
    <location>
        <position position="763"/>
    </location>
    <ligand>
        <name>Ca(2+)</name>
        <dbReference type="ChEBI" id="CHEBI:29108"/>
    </ligand>
</feature>
<feature type="binding site" evidence="6">
    <location>
        <position position="765"/>
    </location>
    <ligand>
        <name>Ca(2+)</name>
        <dbReference type="ChEBI" id="CHEBI:29108"/>
    </ligand>
</feature>
<feature type="binding site" evidence="6">
    <location>
        <position position="770"/>
    </location>
    <ligand>
        <name>Ca(2+)</name>
        <dbReference type="ChEBI" id="CHEBI:29108"/>
    </ligand>
</feature>
<feature type="modified residue" description="N-acetylmethionine" evidence="2">
    <location>
        <position position="1"/>
    </location>
</feature>
<feature type="modified residue" description="Phosphoserine" evidence="2">
    <location>
        <position position="6"/>
    </location>
</feature>
<feature type="modified residue" description="Phosphotyrosine; by FAK1" evidence="2">
    <location>
        <position position="12"/>
    </location>
</feature>
<feature type="modified residue" description="N6-acetyllysine" evidence="2">
    <location>
        <position position="95"/>
    </location>
</feature>
<feature type="modified residue" description="N6-acetyllysine" evidence="2">
    <location>
        <position position="195"/>
    </location>
</feature>
<feature type="modified residue" description="Phosphoserine" evidence="2">
    <location>
        <position position="471"/>
    </location>
</feature>
<feature type="modified residue" description="N6-acetyllysine" evidence="2">
    <location>
        <position position="676"/>
    </location>
</feature>
<feature type="modified residue" description="Phosphoserine" evidence="2">
    <location>
        <position position="677"/>
    </location>
</feature>
<feature type="modified residue" description="Phosphoserine" evidence="4">
    <location>
        <position position="890"/>
    </location>
</feature>